<feature type="chain" id="PRO_0000220072" description="Small ribosomal subunit protein uS3m">
    <location>
        <begin position="1"/>
        <end position="326"/>
    </location>
</feature>
<proteinExistence type="inferred from homology"/>
<gene>
    <name type="primary">VAR1</name>
</gene>
<dbReference type="EMBL" id="AF437291">
    <property type="protein sequence ID" value="AAM34589.1"/>
    <property type="molecule type" value="Genomic_DNA"/>
</dbReference>
<dbReference type="RefSeq" id="NP_644679.1">
    <property type="nucleotide sequence ID" value="NC_003920.1"/>
</dbReference>
<dbReference type="SMR" id="Q8M355"/>
<dbReference type="FunCoup" id="Q8M355">
    <property type="interactions" value="88"/>
</dbReference>
<dbReference type="STRING" id="1064592.Q8M355"/>
<dbReference type="GeneID" id="804907"/>
<dbReference type="InParanoid" id="Q8M355"/>
<dbReference type="Proteomes" id="UP000001640">
    <property type="component" value="Mitochondrion"/>
</dbReference>
<dbReference type="GO" id="GO:0005739">
    <property type="term" value="C:mitochondrion"/>
    <property type="evidence" value="ECO:0007669"/>
    <property type="project" value="UniProtKB-SubCell"/>
</dbReference>
<dbReference type="GO" id="GO:1990904">
    <property type="term" value="C:ribonucleoprotein complex"/>
    <property type="evidence" value="ECO:0007669"/>
    <property type="project" value="UniProtKB-KW"/>
</dbReference>
<dbReference type="GO" id="GO:0005840">
    <property type="term" value="C:ribosome"/>
    <property type="evidence" value="ECO:0007669"/>
    <property type="project" value="UniProtKB-KW"/>
</dbReference>
<dbReference type="GO" id="GO:0003735">
    <property type="term" value="F:structural constituent of ribosome"/>
    <property type="evidence" value="ECO:0007669"/>
    <property type="project" value="InterPro"/>
</dbReference>
<dbReference type="GO" id="GO:0006412">
    <property type="term" value="P:translation"/>
    <property type="evidence" value="ECO:0007669"/>
    <property type="project" value="InterPro"/>
</dbReference>
<dbReference type="InterPro" id="IPR007980">
    <property type="entry name" value="Ribosomal_uS3m_fun"/>
</dbReference>
<dbReference type="Pfam" id="PF05316">
    <property type="entry name" value="VAR1"/>
    <property type="match status" value="1"/>
</dbReference>
<evidence type="ECO:0000250" key="1"/>
<evidence type="ECO:0000305" key="2"/>
<reference key="1">
    <citation type="journal article" date="2002" name="J. Mol. Biol.">
        <title>Inheritance and organisation of the mitochondrial genome differ between two Saccharomyces yeasts.</title>
        <authorList>
            <person name="Petersen R.F."/>
            <person name="Langkjaer R.B."/>
            <person name="Hvidtfeldt J."/>
            <person name="Gartner J."/>
            <person name="Palmen W."/>
            <person name="Ussery D.W."/>
            <person name="Piskur J."/>
        </authorList>
    </citation>
    <scope>NUCLEOTIDE SEQUENCE [LARGE SCALE GENOMIC DNA]</scope>
    <source>
        <strain>ATCC 76901 / BCRC 22586 / CBS 4309 / NBRC 1992 / NRRL Y-12630</strain>
    </source>
</reference>
<accession>Q8M355</accession>
<geneLocation type="mitochondrion"/>
<protein>
    <recommendedName>
        <fullName evidence="2">Small ribosomal subunit protein uS3m</fullName>
    </recommendedName>
    <alternativeName>
        <fullName>Ribosomal protein VAR1, mitochondrial</fullName>
    </alternativeName>
</protein>
<name>RMAR_NAUCA</name>
<comment type="function">
    <text evidence="1">Essential for mitochondrial protein synthesis and required for the maturation of small ribosomal subunits.</text>
</comment>
<comment type="subcellular location">
    <subcellularLocation>
        <location>Mitochondrion</location>
    </subcellularLocation>
</comment>
<comment type="similarity">
    <text evidence="2">Belongs to the universal ribosomal protein uS3 family.</text>
</comment>
<keyword id="KW-0496">Mitochondrion</keyword>
<keyword id="KW-1185">Reference proteome</keyword>
<keyword id="KW-0687">Ribonucleoprotein</keyword>
<keyword id="KW-0689">Ribosomal protein</keyword>
<sequence length="326" mass="39661">MKLNILKLLNNNNNKNMLLKNMLLKMNINNNNMNTNNNNMKYMNNKLQSINNMNNWSLQMYNYNKNNELNMMMMMNMMNKLLYKLMNMIMINNMTMNVNNKNNNNIIMMKPMYQYMMNKLNIKFYYYINNNNMNTNYYMNMLYKLMNTLNNNNNMYMNNMNNIMSMYINKNINIEMIKLNYVYNNKDIMNKYLSTMDIDTLNNNSTMNLLNNMMTKMNNNNIIMNYMNNMNNMRNNKYINNMSSNYIMNMLMYKYLTGWTILLKGRLNKNMTRTNKYILYNGSNKMNMYMKNNYKLNYISNNHFINNINNVNKNGKYNIKVKLSYI</sequence>
<organism>
    <name type="scientific">Naumovozyma castellii</name>
    <name type="common">Yeast</name>
    <name type="synonym">Saccharomyces castellii</name>
    <dbReference type="NCBI Taxonomy" id="27288"/>
    <lineage>
        <taxon>Eukaryota</taxon>
        <taxon>Fungi</taxon>
        <taxon>Dikarya</taxon>
        <taxon>Ascomycota</taxon>
        <taxon>Saccharomycotina</taxon>
        <taxon>Saccharomycetes</taxon>
        <taxon>Saccharomycetales</taxon>
        <taxon>Saccharomycetaceae</taxon>
        <taxon>Naumovozyma</taxon>
    </lineage>
</organism>